<feature type="chain" id="PRO_0000097872" description="Double-strand-break repair protein rad21 homolog">
    <location>
        <begin position="1"/>
        <end position="631"/>
    </location>
</feature>
<feature type="chain" id="PRO_0000446317" description="64-kDa C-terminal product" evidence="13">
    <location>
        <begin position="280"/>
        <end position="631"/>
    </location>
</feature>
<feature type="region of interest" description="Required for interaction with SMARCA5" evidence="12">
    <location>
        <begin position="126"/>
        <end position="282"/>
    </location>
</feature>
<feature type="region of interest" description="Interaction with NIPBL" evidence="21">
    <location>
        <begin position="154"/>
        <end position="171"/>
    </location>
</feature>
<feature type="region of interest" description="Disordered" evidence="3">
    <location>
        <begin position="258"/>
        <end position="285"/>
    </location>
</feature>
<feature type="region of interest" description="Interaction with WAPL and PDS5B" evidence="16">
    <location>
        <begin position="287"/>
        <end position="403"/>
    </location>
</feature>
<feature type="region of interest" description="Interaction with STAG1" evidence="16">
    <location>
        <begin position="362"/>
        <end position="403"/>
    </location>
</feature>
<feature type="region of interest" description="Disordered" evidence="3">
    <location>
        <begin position="423"/>
        <end position="489"/>
    </location>
</feature>
<feature type="region of interest" description="Disordered" evidence="3">
    <location>
        <begin position="517"/>
        <end position="558"/>
    </location>
</feature>
<feature type="compositionally biased region" description="Low complexity" evidence="3">
    <location>
        <begin position="271"/>
        <end position="285"/>
    </location>
</feature>
<feature type="compositionally biased region" description="Basic and acidic residues" evidence="3">
    <location>
        <begin position="423"/>
        <end position="440"/>
    </location>
</feature>
<feature type="compositionally biased region" description="Basic and acidic residues" evidence="3">
    <location>
        <begin position="522"/>
        <end position="532"/>
    </location>
</feature>
<feature type="compositionally biased region" description="Acidic residues" evidence="3">
    <location>
        <begin position="533"/>
        <end position="551"/>
    </location>
</feature>
<feature type="site" description="Cleavage; by ESPL1" evidence="8">
    <location>
        <begin position="172"/>
        <end position="173"/>
    </location>
</feature>
<feature type="site" description="Cleavage; by caspase-3 or caspase-7" evidence="13">
    <location>
        <begin position="279"/>
        <end position="280"/>
    </location>
</feature>
<feature type="site" description="Cleavage; by ESPL1" evidence="8">
    <location>
        <begin position="450"/>
        <end position="451"/>
    </location>
</feature>
<feature type="modified residue" description="Phosphoserine" evidence="33 35">
    <location>
        <position position="46"/>
    </location>
</feature>
<feature type="modified residue" description="Phosphoserine" evidence="34 35 37">
    <location>
        <position position="153"/>
    </location>
</feature>
<feature type="modified residue" description="Phosphoserine" evidence="33 34">
    <location>
        <position position="175"/>
    </location>
</feature>
<feature type="modified residue" description="Phosphoserine" evidence="37">
    <location>
        <position position="249"/>
    </location>
</feature>
<feature type="modified residue" description="Phosphothreonine" evidence="36">
    <location>
        <position position="394"/>
    </location>
</feature>
<feature type="modified residue" description="Phosphoserine" evidence="36">
    <location>
        <position position="454"/>
    </location>
</feature>
<feature type="modified residue" description="Phosphoserine" evidence="36">
    <location>
        <position position="545"/>
    </location>
</feature>
<feature type="modified residue" description="Phosphothreonine" evidence="36">
    <location>
        <position position="623"/>
    </location>
</feature>
<feature type="cross-link" description="Glycyl lysine isopeptide (Lys-Gly) (interchain with G-Cter in SUMO2)" evidence="38">
    <location>
        <position position="48"/>
    </location>
</feature>
<feature type="cross-link" description="Glycyl lysine isopeptide (Lys-Gly) (interchain with G-Cter in SUMO2)" evidence="38">
    <location>
        <position position="216"/>
    </location>
</feature>
<feature type="cross-link" description="Glycyl lysine isopeptide (Lys-Gly) (interchain with G-Cter in SUMO2)" evidence="38">
    <location>
        <position position="418"/>
    </location>
</feature>
<feature type="sequence variant" id="VAR_083980" description="In CDLS4." evidence="20">
    <location>
        <begin position="197"/>
        <end position="631"/>
    </location>
</feature>
<feature type="sequence variant" id="VAR_068691" description="In CDLS4; dbSNP:rs387907212." evidence="18">
    <original>P</original>
    <variation>R</variation>
    <location>
        <position position="376"/>
    </location>
</feature>
<feature type="sequence variant" id="VAR_014281" description="Found in a radiation-sensitive cancer patient; dbSNP:rs755168088." evidence="7">
    <original>G</original>
    <variation>R</variation>
    <location>
        <position position="481"/>
    </location>
</feature>
<feature type="sequence variant" id="VAR_068692" description="In CDLS4; dbSNP:rs387907213." evidence="18">
    <original>C</original>
    <variation>R</variation>
    <location>
        <position position="585"/>
    </location>
</feature>
<feature type="sequence variant" id="VAR_081285" description="In MGS; causes delayed food transit along the gut, when tested in zebrafish; may affect RUNX1 and APOB expression; dbSNP:rs775266057." evidence="19">
    <original>A</original>
    <variation>T</variation>
    <location>
        <position position="622"/>
    </location>
</feature>
<feature type="mutagenesis site" description="Abolishes interaction with SMC1." evidence="12">
    <location>
        <begin position="1"/>
        <end position="126"/>
    </location>
</feature>
<feature type="mutagenesis site" description="Abolishes binding to SMARCA5." evidence="12">
    <location>
        <begin position="126"/>
        <end position="282"/>
    </location>
</feature>
<feature type="mutagenesis site" description="Abolishes first cleavage by ESPL1, no effect on nuclear localization." evidence="8">
    <original>R</original>
    <variation>A</variation>
    <location>
        <position position="172"/>
    </location>
</feature>
<feature type="mutagenesis site" description="Loss of cleavage by caspase-3 or caspase-7." evidence="13">
    <original>DSPDS</original>
    <variation>AAPAA</variation>
    <location>
        <begin position="276"/>
        <end position="280"/>
    </location>
</feature>
<feature type="mutagenesis site" description="Loss of cleavage by caspase-3 or caspase-7." evidence="10 13">
    <original>D</original>
    <variation>A</variation>
    <variation>E</variation>
    <location>
        <position position="279"/>
    </location>
</feature>
<feature type="mutagenesis site" description="No effect on cleavage by caspase-3 or caspase-7." evidence="10">
    <original>D</original>
    <variation>E</variation>
    <location>
        <position position="282"/>
    </location>
</feature>
<feature type="mutagenesis site" description="Abolishes second cleavage by ESPL1, no effect on nuclear localization." evidence="8">
    <original>R</original>
    <variation>A</variation>
    <location>
        <position position="450"/>
    </location>
</feature>
<feature type="sequence conflict" description="In Ref. 1; CAA66940." evidence="29" ref="1">
    <original>N</original>
    <variation>I</variation>
    <location>
        <position position="136"/>
    </location>
</feature>
<feature type="strand" evidence="44">
    <location>
        <begin position="6"/>
        <end position="9"/>
    </location>
</feature>
<feature type="helix" evidence="44">
    <location>
        <begin position="13"/>
        <end position="22"/>
    </location>
</feature>
<feature type="helix" evidence="44">
    <location>
        <begin position="24"/>
        <end position="26"/>
    </location>
</feature>
<feature type="helix" evidence="44">
    <location>
        <begin position="29"/>
        <end position="34"/>
    </location>
</feature>
<feature type="helix" evidence="44">
    <location>
        <begin position="37"/>
        <end position="45"/>
    </location>
</feature>
<feature type="helix" evidence="44">
    <location>
        <begin position="53"/>
        <end position="79"/>
    </location>
</feature>
<feature type="helix" evidence="41">
    <location>
        <begin position="334"/>
        <end position="336"/>
    </location>
</feature>
<feature type="helix" evidence="39">
    <location>
        <begin position="345"/>
        <end position="347"/>
    </location>
</feature>
<feature type="helix" evidence="40">
    <location>
        <begin position="358"/>
        <end position="365"/>
    </location>
</feature>
<feature type="helix" evidence="40">
    <location>
        <begin position="369"/>
        <end position="372"/>
    </location>
</feature>
<feature type="helix" evidence="40">
    <location>
        <begin position="383"/>
        <end position="390"/>
    </location>
</feature>
<feature type="turn" evidence="39">
    <location>
        <begin position="391"/>
        <end position="393"/>
    </location>
</feature>
<feature type="turn" evidence="42">
    <location>
        <begin position="569"/>
        <end position="572"/>
    </location>
</feature>
<feature type="helix" evidence="43">
    <location>
        <begin position="581"/>
        <end position="584"/>
    </location>
</feature>
<feature type="turn" evidence="43">
    <location>
        <begin position="585"/>
        <end position="587"/>
    </location>
</feature>
<feature type="helix" evidence="43">
    <location>
        <begin position="590"/>
        <end position="605"/>
    </location>
</feature>
<feature type="strand" evidence="43">
    <location>
        <begin position="608"/>
        <end position="615"/>
    </location>
</feature>
<feature type="strand" evidence="43">
    <location>
        <begin position="620"/>
        <end position="624"/>
    </location>
</feature>
<gene>
    <name type="primary">RAD21</name>
    <name evidence="24" type="synonym">HR21</name>
    <name type="synonym">KIAA0078</name>
    <name type="synonym">NXP1</name>
    <name evidence="25" type="synonym">SCC1</name>
</gene>
<keyword id="KW-0002">3D-structure</keyword>
<keyword id="KW-0010">Activator</keyword>
<keyword id="KW-0053">Apoptosis</keyword>
<keyword id="KW-0131">Cell cycle</keyword>
<keyword id="KW-0132">Cell division</keyword>
<keyword id="KW-0137">Centromere</keyword>
<keyword id="KW-0158">Chromosome</keyword>
<keyword id="KW-0159">Chromosome partition</keyword>
<keyword id="KW-0963">Cytoplasm</keyword>
<keyword id="KW-0206">Cytoskeleton</keyword>
<keyword id="KW-0217">Developmental protein</keyword>
<keyword id="KW-0903">Direct protein sequencing</keyword>
<keyword id="KW-0225">Disease variant</keyword>
<keyword id="KW-0227">DNA damage</keyword>
<keyword id="KW-0234">DNA repair</keyword>
<keyword id="KW-0238">DNA-binding</keyword>
<keyword id="KW-0991">Intellectual disability</keyword>
<keyword id="KW-1017">Isopeptide bond</keyword>
<keyword id="KW-0498">Mitosis</keyword>
<keyword id="KW-0539">Nucleus</keyword>
<keyword id="KW-0597">Phosphoprotein</keyword>
<keyword id="KW-1267">Proteomics identification</keyword>
<keyword id="KW-1185">Reference proteome</keyword>
<keyword id="KW-0678">Repressor</keyword>
<keyword id="KW-0804">Transcription</keyword>
<keyword id="KW-0805">Transcription regulation</keyword>
<keyword id="KW-0832">Ubl conjugation</keyword>
<comment type="function">
    <molecule>Double-strand-break repair protein rad21 homolog</molecule>
    <text evidence="1 2 8 9 19 30">As a member of the cohesin complex, involved in sister chromatid cohesion from the time of DNA replication in S phase to their segregation in mitosis, a function that is essential for proper chromosome segregation, post-replicative DNA repair, and the prevention of inappropriate recombination between repetitive regions (PubMed:11509732). The cohesin complex may also play a role in spindle pole assembly during mitosis (PubMed:11590136). In interphase, cohesins may function in the control of gene expression by binding to numerous sites within the genome (By similarity). May control RUNX1 gene expression (Probable). Binds to and represses APOB gene promoter (PubMed:25575569). May play a role in embryonic gut development, possibly through the regulation of enteric neuron development (By similarity).</text>
</comment>
<comment type="function">
    <molecule>64-kDa C-terminal product</molecule>
    <text evidence="10 13">May promote apoptosis.</text>
</comment>
<comment type="subunit">
    <text evidence="5 9 12 14 15 16 17 19 21">Component of the cohesin complex, which consists of an SMC1A/B and SMC3 heterodimer core and 2 non-Smc subunits RAD21 and STAG1/SA1, STAG2/SA2 or STAG3/SA3 (PubMed:10931856, PubMed:11590136, PubMed:22628566, PubMed:25575569, PubMed:32409525). Interacts (via C-terminus) with SMC1A and (via N-terminus) with SMC3; these interactions are direct (PubMed:12198550, PubMed:32409525). The cohesin complex interacts with NUMA1 (PubMed:11590136). The cohesin complex also interacts with CDCA5, PDS5A and PDS5B; this interaction might regulate the ability of the cohesin complex to mediate sister chromatid cohesion (PubMed:15837422). The interaction with PDS5B is direct and is stimulated by STAG1/SA1 (PubMed:19696148). The cohesin complex interacts with the cohesin loading complex subunits NIPBL/Scc2 (via HEAT repeats) and MAU2/Scc4 (PubMed:22628566). NIPBL directly contacts all members of the complex, RAD21, SMC1A/B, SMC3 and STAG1 (PubMed:32409525). The cohesin complex interacts with DDX11/ChIR1 (PubMed:17105772). Directly interacts with WAPL; this interaction is stimulated by STAG1/SA1 (PubMed:19696148). Interacts with the ISWI chromatin remodeling complex component SMARCA5/SNF2h; the interaction is direct (PubMed:12198550). Interacts with the NuRD complex component CHD4; the interaction is direct (PubMed:12198550).</text>
</comment>
<comment type="interaction">
    <interactant intactId="EBI-80739">
        <id>O60216</id>
    </interactant>
    <interactant intactId="EBI-741101">
        <id>Q13643</id>
        <label>FHL3</label>
    </interactant>
    <organismsDiffer>false</organismsDiffer>
    <experiments>4</experiments>
</comment>
<comment type="interaction">
    <interactant intactId="EBI-80739">
        <id>O60216</id>
    </interactant>
    <interactant intactId="EBI-1175454">
        <id>Q29RF7</id>
        <label>PDS5A</label>
    </interactant>
    <organismsDiffer>false</organismsDiffer>
    <experiments>6</experiments>
</comment>
<comment type="interaction">
    <interactant intactId="EBI-80739">
        <id>O60216</id>
    </interactant>
    <interactant intactId="EBI-1175604">
        <id>Q9NTI5</id>
        <label>PDS5B</label>
    </interactant>
    <organismsDiffer>false</organismsDiffer>
    <experiments>5</experiments>
</comment>
<comment type="interaction">
    <interactant intactId="EBI-80739">
        <id>O60216</id>
    </interactant>
    <interactant intactId="EBI-80690">
        <id>Q14683</id>
        <label>SMC1A</label>
    </interactant>
    <organismsDiffer>false</organismsDiffer>
    <experiments>18</experiments>
</comment>
<comment type="interaction">
    <interactant intactId="EBI-80739">
        <id>O60216</id>
    </interactant>
    <interactant intactId="EBI-80718">
        <id>Q9UQE7</id>
        <label>SMC3</label>
    </interactant>
    <organismsDiffer>false</organismsDiffer>
    <experiments>18</experiments>
</comment>
<comment type="interaction">
    <interactant intactId="EBI-80739">
        <id>O60216</id>
    </interactant>
    <interactant intactId="EBI-2515416">
        <id>Q9NP77</id>
        <label>SSU72</label>
    </interactant>
    <organismsDiffer>false</organismsDiffer>
    <experiments>9</experiments>
</comment>
<comment type="interaction">
    <interactant intactId="EBI-80739">
        <id>O60216</id>
    </interactant>
    <interactant intactId="EBI-1057252">
        <id>Q8N3U4</id>
        <label>STAG2</label>
    </interactant>
    <organismsDiffer>false</organismsDiffer>
    <experiments>22</experiments>
</comment>
<comment type="interaction">
    <interactant intactId="EBI-80739">
        <id>O60216</id>
    </interactant>
    <interactant intactId="EBI-1022242">
        <id>Q7Z5K2</id>
        <label>WAPL</label>
    </interactant>
    <organismsDiffer>false</organismsDiffer>
    <experiments>18</experiments>
</comment>
<comment type="subcellular location">
    <molecule>Double-strand-break repair protein rad21 homolog</molecule>
    <subcellularLocation>
        <location evidence="6 8 13">Nucleus</location>
    </subcellularLocation>
    <subcellularLocation>
        <location evidence="4 9">Nucleus matrix</location>
    </subcellularLocation>
    <subcellularLocation>
        <location evidence="6 9">Chromosome</location>
    </subcellularLocation>
    <subcellularLocation>
        <location evidence="6">Chromosome</location>
        <location evidence="6">Centromere</location>
    </subcellularLocation>
    <subcellularLocation>
        <location evidence="6 9">Cytoplasm</location>
        <location evidence="6 9">Cytoskeleton</location>
        <location evidence="6 9">Spindle pole</location>
    </subcellularLocation>
    <text evidence="6 8 9 11">Associates with chromatin (PubMed:11073952, PubMed:11590136). Before prophase, scattered along chromosome arms (PubMed:11073952). During prophase and prometaphase, most cohesins dissociate from the arms of condensing chromosome, possibly through PLK1-mediated phosphorylation (PubMed:11931760). A small amount of cohesin remains in centromeric regions and is removed from chromosomes only at the onset of anaphase. At anaphase, cleavage by separase/ESPL1 leads to the dissociation of cohesin from chromosomes and chromosome separation (PubMed:11073952, PubMed:11509732).</text>
</comment>
<comment type="subcellular location">
    <molecule>64-kDa C-terminal product</molecule>
    <subcellularLocation>
        <location evidence="10 13">Cytoplasm</location>
        <location evidence="10 13">Cytosol</location>
    </subcellularLocation>
    <subcellularLocation>
        <location evidence="10 13">Nucleus</location>
    </subcellularLocation>
</comment>
<comment type="tissue specificity">
    <text evidence="19">Expressed in the gut (at protein level).</text>
</comment>
<comment type="developmental stage">
    <text evidence="6 22">Regulated in a cell cycle-dependent manner: expression increases in late S phase and reaches maximum in G2 at the nucleotide level (PubMed:8812457). Not regulated during the cell cycle (at protein level) (PubMed:11073952).</text>
</comment>
<comment type="domain">
    <text evidence="21">The C-terminal part associates with the ATPase head of SMC1A, while the N-terminal part binds to the ATPase head of SMC3.</text>
</comment>
<comment type="PTM">
    <text evidence="8 10 13">Cleaved by separase/ESPL1 at the onset of anaphase; this cleavage is required for sister chromatid separation and cytokinesis (PubMed:11509732). Cleaved by caspase-3/CASP3 or caspase-7/CASP7 at the beginning of apoptosis (PubMed:11875078, PubMed:12417729).</text>
</comment>
<comment type="PTM">
    <text evidence="6">Phosphorylated; becomes hyperphosphorylated in M phase of cell cycle. The large dissociation of cohesin from chromosome arms during prophase may be partly due to its phosphorylation by PLK1.</text>
</comment>
<comment type="disease" evidence="18 20">
    <disease id="DI-03491">
        <name>Cornelia de Lange syndrome 4 with or without midline brain defects</name>
        <acronym>CDLS4</acronym>
        <description>A form of Cornelia de Lange syndrome, a clinically heterogeneous developmental disorder associated with malformations affecting multiple systems. It is characterized by facial dysmorphisms, abnormal hands and feet, growth delay, cognitive retardation, hirsutism, gastroesophageal dysfunction and cardiac, ophthalmologic and genitourinary anomalies.</description>
        <dbReference type="MIM" id="614701"/>
    </disease>
    <text>The disease is caused by variants affecting the gene represented in this entry.</text>
</comment>
<comment type="disease" evidence="19">
    <disease id="DI-05340">
        <name>Mungan syndrome</name>
        <acronym>MGS</acronym>
        <description>An autosomal recessive disease characterized by visceral neuromyopathy, intestinal dysmotility and chronic intestinal pseudoobstruction, megaduodenum, long-segment Barrett esophagus, and a variety of cardiac valve or septal defects such as membranous ventricular septal defect, pulmonary and tricuspid valve regurgitation.</description>
        <dbReference type="MIM" id="611376"/>
    </disease>
    <text>The disease is caused by variants affecting the gene represented in this entry.</text>
</comment>
<comment type="similarity">
    <text evidence="29">Belongs to the rad21 family.</text>
</comment>
<comment type="sequence caution" evidence="29">
    <conflict type="erroneous initiation">
        <sequence resource="EMBL-CDS" id="BAA07554"/>
    </conflict>
    <text>Extended N-terminus.</text>
</comment>
<accession>O60216</accession>
<accession>A8K0E0</accession>
<accession>Q15001</accession>
<accession>Q99568</accession>
<proteinExistence type="evidence at protein level"/>
<protein>
    <recommendedName>
        <fullName>Double-strand-break repair protein rad21 homolog</fullName>
        <shortName evidence="28">hHR21</shortName>
    </recommendedName>
    <alternativeName>
        <fullName evidence="23">Nuclear matrix protein 1</fullName>
        <shortName evidence="23">NXP-1</shortName>
    </alternativeName>
    <alternativeName>
        <fullName>SCC1 homolog</fullName>
    </alternativeName>
    <component>
        <recommendedName>
            <fullName evidence="27">64-kDa C-terminal product</fullName>
        </recommendedName>
        <alternativeName>
            <fullName evidence="27">64-kDa carboxy-terminal product</fullName>
        </alternativeName>
        <alternativeName>
            <fullName evidence="26">65-kDa carboxy-terminal product</fullName>
        </alternativeName>
    </component>
</protein>
<name>RAD21_HUMAN</name>
<organism>
    <name type="scientific">Homo sapiens</name>
    <name type="common">Human</name>
    <dbReference type="NCBI Taxonomy" id="9606"/>
    <lineage>
        <taxon>Eukaryota</taxon>
        <taxon>Metazoa</taxon>
        <taxon>Chordata</taxon>
        <taxon>Craniata</taxon>
        <taxon>Vertebrata</taxon>
        <taxon>Euteleostomi</taxon>
        <taxon>Mammalia</taxon>
        <taxon>Eutheria</taxon>
        <taxon>Euarchontoglires</taxon>
        <taxon>Primates</taxon>
        <taxon>Haplorrhini</taxon>
        <taxon>Catarrhini</taxon>
        <taxon>Hominidae</taxon>
        <taxon>Homo</taxon>
    </lineage>
</organism>
<reference key="1">
    <citation type="journal article" date="1996" name="Genomics">
        <title>Sequence conservation of the rad21 Schizosaccharomyces pombe DNA double-strand break repair gene in human and mouse.</title>
        <authorList>
            <person name="McKay M.J."/>
            <person name="Troelstra C."/>
            <person name="van der Spek P."/>
            <person name="Kanaar R."/>
            <person name="Smit B."/>
            <person name="Hagemeijer A."/>
            <person name="Bootsma D."/>
            <person name="Hoeijmakers J.H.J."/>
        </authorList>
    </citation>
    <scope>NUCLEOTIDE SEQUENCE [MRNA]</scope>
    <scope>DEVELOPMENTAL STAGE</scope>
    <source>
        <tissue>Testis</tissue>
    </source>
</reference>
<reference key="2">
    <citation type="journal article" date="1994" name="DNA Res.">
        <title>Prediction of the coding sequences of unidentified human genes. II. The coding sequences of 40 new genes (KIAA0041-KIAA0080) deduced by analysis of cDNA clones from human cell line KG-1.</title>
        <authorList>
            <person name="Nomura N."/>
            <person name="Nagase T."/>
            <person name="Miyajima N."/>
            <person name="Sazuka T."/>
            <person name="Tanaka A."/>
            <person name="Sato S."/>
            <person name="Seki N."/>
            <person name="Kawarabayasi Y."/>
            <person name="Ishikawa K."/>
            <person name="Tabata S."/>
        </authorList>
    </citation>
    <scope>NUCLEOTIDE SEQUENCE [LARGE SCALE MRNA]</scope>
    <source>
        <tissue>Bone marrow</tissue>
    </source>
</reference>
<reference key="3">
    <citation type="submission" date="2004-07" db="EMBL/GenBank/DDBJ databases">
        <authorList>
            <consortium name="NIEHS SNPs program"/>
        </authorList>
    </citation>
    <scope>NUCLEOTIDE SEQUENCE [GENOMIC DNA]</scope>
</reference>
<reference key="4">
    <citation type="journal article" date="2004" name="Nat. Genet.">
        <title>Complete sequencing and characterization of 21,243 full-length human cDNAs.</title>
        <authorList>
            <person name="Ota T."/>
            <person name="Suzuki Y."/>
            <person name="Nishikawa T."/>
            <person name="Otsuki T."/>
            <person name="Sugiyama T."/>
            <person name="Irie R."/>
            <person name="Wakamatsu A."/>
            <person name="Hayashi K."/>
            <person name="Sato H."/>
            <person name="Nagai K."/>
            <person name="Kimura K."/>
            <person name="Makita H."/>
            <person name="Sekine M."/>
            <person name="Obayashi M."/>
            <person name="Nishi T."/>
            <person name="Shibahara T."/>
            <person name="Tanaka T."/>
            <person name="Ishii S."/>
            <person name="Yamamoto J."/>
            <person name="Saito K."/>
            <person name="Kawai Y."/>
            <person name="Isono Y."/>
            <person name="Nakamura Y."/>
            <person name="Nagahari K."/>
            <person name="Murakami K."/>
            <person name="Yasuda T."/>
            <person name="Iwayanagi T."/>
            <person name="Wagatsuma M."/>
            <person name="Shiratori A."/>
            <person name="Sudo H."/>
            <person name="Hosoiri T."/>
            <person name="Kaku Y."/>
            <person name="Kodaira H."/>
            <person name="Kondo H."/>
            <person name="Sugawara M."/>
            <person name="Takahashi M."/>
            <person name="Kanda K."/>
            <person name="Yokoi T."/>
            <person name="Furuya T."/>
            <person name="Kikkawa E."/>
            <person name="Omura Y."/>
            <person name="Abe K."/>
            <person name="Kamihara K."/>
            <person name="Katsuta N."/>
            <person name="Sato K."/>
            <person name="Tanikawa M."/>
            <person name="Yamazaki M."/>
            <person name="Ninomiya K."/>
            <person name="Ishibashi T."/>
            <person name="Yamashita H."/>
            <person name="Murakawa K."/>
            <person name="Fujimori K."/>
            <person name="Tanai H."/>
            <person name="Kimata M."/>
            <person name="Watanabe M."/>
            <person name="Hiraoka S."/>
            <person name="Chiba Y."/>
            <person name="Ishida S."/>
            <person name="Ono Y."/>
            <person name="Takiguchi S."/>
            <person name="Watanabe S."/>
            <person name="Yosida M."/>
            <person name="Hotuta T."/>
            <person name="Kusano J."/>
            <person name="Kanehori K."/>
            <person name="Takahashi-Fujii A."/>
            <person name="Hara H."/>
            <person name="Tanase T.-O."/>
            <person name="Nomura Y."/>
            <person name="Togiya S."/>
            <person name="Komai F."/>
            <person name="Hara R."/>
            <person name="Takeuchi K."/>
            <person name="Arita M."/>
            <person name="Imose N."/>
            <person name="Musashino K."/>
            <person name="Yuuki H."/>
            <person name="Oshima A."/>
            <person name="Sasaki N."/>
            <person name="Aotsuka S."/>
            <person name="Yoshikawa Y."/>
            <person name="Matsunawa H."/>
            <person name="Ichihara T."/>
            <person name="Shiohata N."/>
            <person name="Sano S."/>
            <person name="Moriya S."/>
            <person name="Momiyama H."/>
            <person name="Satoh N."/>
            <person name="Takami S."/>
            <person name="Terashima Y."/>
            <person name="Suzuki O."/>
            <person name="Nakagawa S."/>
            <person name="Senoh A."/>
            <person name="Mizoguchi H."/>
            <person name="Goto Y."/>
            <person name="Shimizu F."/>
            <person name="Wakebe H."/>
            <person name="Hishigaki H."/>
            <person name="Watanabe T."/>
            <person name="Sugiyama A."/>
            <person name="Takemoto M."/>
            <person name="Kawakami B."/>
            <person name="Yamazaki M."/>
            <person name="Watanabe K."/>
            <person name="Kumagai A."/>
            <person name="Itakura S."/>
            <person name="Fukuzumi Y."/>
            <person name="Fujimori Y."/>
            <person name="Komiyama M."/>
            <person name="Tashiro H."/>
            <person name="Tanigami A."/>
            <person name="Fujiwara T."/>
            <person name="Ono T."/>
            <person name="Yamada K."/>
            <person name="Fujii Y."/>
            <person name="Ozaki K."/>
            <person name="Hirao M."/>
            <person name="Ohmori Y."/>
            <person name="Kawabata A."/>
            <person name="Hikiji T."/>
            <person name="Kobatake N."/>
            <person name="Inagaki H."/>
            <person name="Ikema Y."/>
            <person name="Okamoto S."/>
            <person name="Okitani R."/>
            <person name="Kawakami T."/>
            <person name="Noguchi S."/>
            <person name="Itoh T."/>
            <person name="Shigeta K."/>
            <person name="Senba T."/>
            <person name="Matsumura K."/>
            <person name="Nakajima Y."/>
            <person name="Mizuno T."/>
            <person name="Morinaga M."/>
            <person name="Sasaki M."/>
            <person name="Togashi T."/>
            <person name="Oyama M."/>
            <person name="Hata H."/>
            <person name="Watanabe M."/>
            <person name="Komatsu T."/>
            <person name="Mizushima-Sugano J."/>
            <person name="Satoh T."/>
            <person name="Shirai Y."/>
            <person name="Takahashi Y."/>
            <person name="Nakagawa K."/>
            <person name="Okumura K."/>
            <person name="Nagase T."/>
            <person name="Nomura N."/>
            <person name="Kikuchi H."/>
            <person name="Masuho Y."/>
            <person name="Yamashita R."/>
            <person name="Nakai K."/>
            <person name="Yada T."/>
            <person name="Nakamura Y."/>
            <person name="Ohara O."/>
            <person name="Isogai T."/>
            <person name="Sugano S."/>
        </authorList>
    </citation>
    <scope>NUCLEOTIDE SEQUENCE [LARGE SCALE MRNA]</scope>
    <source>
        <tissue>Cerebellum</tissue>
    </source>
</reference>
<reference key="5">
    <citation type="submission" date="2005-07" db="EMBL/GenBank/DDBJ databases">
        <authorList>
            <person name="Mural R.J."/>
            <person name="Istrail S."/>
            <person name="Sutton G.G."/>
            <person name="Florea L."/>
            <person name="Halpern A.L."/>
            <person name="Mobarry C.M."/>
            <person name="Lippert R."/>
            <person name="Walenz B."/>
            <person name="Shatkay H."/>
            <person name="Dew I."/>
            <person name="Miller J.R."/>
            <person name="Flanigan M.J."/>
            <person name="Edwards N.J."/>
            <person name="Bolanos R."/>
            <person name="Fasulo D."/>
            <person name="Halldorsson B.V."/>
            <person name="Hannenhalli S."/>
            <person name="Turner R."/>
            <person name="Yooseph S."/>
            <person name="Lu F."/>
            <person name="Nusskern D.R."/>
            <person name="Shue B.C."/>
            <person name="Zheng X.H."/>
            <person name="Zhong F."/>
            <person name="Delcher A.L."/>
            <person name="Huson D.H."/>
            <person name="Kravitz S.A."/>
            <person name="Mouchard L."/>
            <person name="Reinert K."/>
            <person name="Remington K.A."/>
            <person name="Clark A.G."/>
            <person name="Waterman M.S."/>
            <person name="Eichler E.E."/>
            <person name="Adams M.D."/>
            <person name="Hunkapiller M.W."/>
            <person name="Myers E.W."/>
            <person name="Venter J.C."/>
        </authorList>
    </citation>
    <scope>NUCLEOTIDE SEQUENCE [LARGE SCALE GENOMIC DNA]</scope>
</reference>
<reference key="6">
    <citation type="journal article" date="2004" name="Genome Res.">
        <title>The status, quality, and expansion of the NIH full-length cDNA project: the Mammalian Gene Collection (MGC).</title>
        <authorList>
            <consortium name="The MGC Project Team"/>
        </authorList>
    </citation>
    <scope>NUCLEOTIDE SEQUENCE [LARGE SCALE MRNA]</scope>
    <source>
        <tissue>Testis</tissue>
    </source>
</reference>
<reference key="7">
    <citation type="journal article" date="2000" name="J. Cell Biol.">
        <title>Identification and characterization of SA/Scc3p subunits in the Xenopus and human cohesin complexes.</title>
        <authorList>
            <person name="Losada A."/>
            <person name="Yokochi T."/>
            <person name="Kobayashi R."/>
            <person name="Hirano T."/>
        </authorList>
    </citation>
    <scope>IDENTIFICATION IN THE COHESIN COMPLEX</scope>
</reference>
<reference key="8">
    <citation type="journal article" date="2001" name="J. Biol. Chem.">
        <title>A potential role for human cohesin in mitotic spindle aster assembly.</title>
        <authorList>
            <person name="Gregson H.C."/>
            <person name="Schmiesing J.A."/>
            <person name="Kim J.-S."/>
            <person name="Kobayashi T."/>
            <person name="Zhou S."/>
            <person name="Yokomori K."/>
        </authorList>
    </citation>
    <scope>PROTEIN SEQUENCE OF 406-418</scope>
    <scope>IDENTIFICATION IN THE COHESIN COMPLEX</scope>
    <scope>INTERACTION WITH NUMA1</scope>
    <scope>SUBCELLULAR LOCATION</scope>
    <scope>FUNCTION</scope>
</reference>
<reference key="9">
    <citation type="journal article" date="2002" name="Mol. Cell">
        <title>The dissociation of cohesin from chromosomes in prophase is regulated by Polo-like kinase.</title>
        <authorList>
            <person name="Sumara I."/>
            <person name="Vorlaufer E."/>
            <person name="Stukenberg P.T."/>
            <person name="Kelm O."/>
            <person name="Redemann N."/>
            <person name="Nigg E.A."/>
            <person name="Peters J.-M."/>
        </authorList>
    </citation>
    <scope>PHOSPHORYLATION BY PLK1</scope>
</reference>
<reference key="10">
    <citation type="journal article" date="2002" name="Mol. Cell. Biol.">
        <title>Linking sister chromatid cohesion and apoptosis: role of rad21.</title>
        <authorList>
            <person name="Pati D."/>
            <person name="Zhang N."/>
            <person name="Plon S.E."/>
        </authorList>
    </citation>
    <scope>PROTEIN SEQUENCE OF 280-286 (64-KDA C-TERMINAL PRODUCT)</scope>
    <scope>CLEAVAGE BY CASPASE-3 OR CASPASE-7</scope>
    <scope>FUNCTION</scope>
    <scope>MUTAGENESIS OF 276-ASP--SER-280 AND ASP-279</scope>
    <scope>SUBCELLULAR LOCATION</scope>
</reference>
<reference key="11">
    <citation type="journal article" date="2000" name="Biochem. Biophys. Res. Commun.">
        <title>NXP-1, a human protein related to Rad21/Scc1/Mcd1, is a component of the nuclear matrix.</title>
        <authorList>
            <person name="Sadano H."/>
            <person name="Sugimoto H."/>
            <person name="Sakai F."/>
            <person name="Nomura N."/>
            <person name="Osumi T."/>
        </authorList>
    </citation>
    <scope>SUBCELLULAR LOCATION</scope>
</reference>
<reference key="12">
    <citation type="journal article" date="2001" name="J. Biol. Chem.">
        <title>Human chromatid cohesin component hRad21 is phosphorylated in M phase and associated with metaphase centromeres.</title>
        <authorList>
            <person name="Hoque M.T."/>
            <person name="Ishikawa F."/>
        </authorList>
    </citation>
    <scope>SUBCELLULAR LOCATION</scope>
    <scope>DEVELOPMENTAL STAGE</scope>
    <scope>PHOSPHORYLATION</scope>
</reference>
<reference key="13">
    <citation type="journal article" date="2001" name="Science">
        <title>Cohesin cleavage by separase required for anaphase and cytokinesis in human cells.</title>
        <authorList>
            <person name="Hauf S."/>
            <person name="Waizenegger I.C."/>
            <person name="Peters J.-M."/>
        </authorList>
    </citation>
    <scope>FUNCTION</scope>
    <scope>CLEAVAGE BY ESPL1</scope>
    <scope>MUTAGENESIS OF ARG-172 AND ARG-450</scope>
    <scope>SUBCELLULAR LOCATION</scope>
</reference>
<reference key="14">
    <citation type="journal article" date="2002" name="J. Biol. Chem.">
        <title>Caspase proteolysis of the cohesin component RAD21 promotes apoptosis.</title>
        <authorList>
            <person name="Chen F."/>
            <person name="Kamradt M."/>
            <person name="Mulcahy M."/>
            <person name="Byun Y."/>
            <person name="Xu H."/>
            <person name="McKay M.J."/>
            <person name="Cryns V.L."/>
        </authorList>
    </citation>
    <scope>FUNCTION</scope>
    <scope>CLEAVAGE BY CASPASE-3 OR CASPASE-7</scope>
    <scope>SUBCELLULAR LOCATION</scope>
    <scope>MUTAGENESIS OF ASP-279 AND ASP-282</scope>
</reference>
<reference key="15">
    <citation type="journal article" date="2002" name="Nature">
        <title>A chromatin remodelling complex that loads cohesin onto human chromosomes.</title>
        <authorList>
            <person name="Hakimi M.-A."/>
            <person name="Bochar D.A."/>
            <person name="Schmiesing J.A."/>
            <person name="Dong Y."/>
            <person name="Barak O.G."/>
            <person name="Speicher D.W."/>
            <person name="Yokomori K."/>
            <person name="Shiekhattar R."/>
        </authorList>
    </citation>
    <scope>INTERACTION WITH SMARCA5; SMC1A AND CHD4</scope>
    <scope>MUTAGENESIS OF 1-MET--ASP-126 AND 126-ASP--ASP-282</scope>
</reference>
<reference key="16">
    <citation type="journal article" date="2005" name="Mol. Cell">
        <title>Sororin, a substrate of the anaphase-promoting complex, is required for sister chromatid cohesion in vertebrates.</title>
        <authorList>
            <person name="Rankin S."/>
            <person name="Ayad N.G."/>
            <person name="Kirschner M.W."/>
        </authorList>
    </citation>
    <scope>INTERACTION WITH CDCA5; PDS5A AND PDS5B</scope>
</reference>
<reference key="17">
    <citation type="journal article" date="2005" name="Mol. Cell">
        <authorList>
            <person name="Rankin S."/>
            <person name="Ayad N.G."/>
            <person name="Kirschner M.W."/>
        </authorList>
    </citation>
    <scope>ERRATUM OF PUBMED:15837422</scope>
</reference>
<reference key="18">
    <citation type="journal article" date="2006" name="J. Cell Sci.">
        <title>The DNA helicase ChlR1 is required for sister chromatid cohesion in mammalian cells.</title>
        <authorList>
            <person name="Parish J.L."/>
            <person name="Rosa J."/>
            <person name="Wang X."/>
            <person name="Lahti J.M."/>
            <person name="Doxsey S.J."/>
            <person name="Androphy E.J."/>
        </authorList>
    </citation>
    <scope>INTERACTION WITH DDX11</scope>
</reference>
<reference key="19">
    <citation type="journal article" date="2008" name="Proc. Natl. Acad. Sci. U.S.A.">
        <title>A quantitative atlas of mitotic phosphorylation.</title>
        <authorList>
            <person name="Dephoure N."/>
            <person name="Zhou C."/>
            <person name="Villen J."/>
            <person name="Beausoleil S.A."/>
            <person name="Bakalarski C.E."/>
            <person name="Elledge S.J."/>
            <person name="Gygi S.P."/>
        </authorList>
    </citation>
    <scope>PHOSPHORYLATION [LARGE SCALE ANALYSIS] AT SER-46 AND SER-175</scope>
    <scope>IDENTIFICATION BY MASS SPECTROMETRY [LARGE SCALE ANALYSIS]</scope>
    <source>
        <tissue>Cervix carcinoma</tissue>
    </source>
</reference>
<reference key="20">
    <citation type="journal article" date="2009" name="Genes Dev.">
        <title>Releasing cohesin from chromosome arms in early mitosis: opposing actions of Wapl-Pds5 and Sgo1.</title>
        <authorList>
            <person name="Shintomi K."/>
            <person name="Hirano T."/>
        </authorList>
    </citation>
    <scope>INTERACTION WITH PDS5B; STAG1 AND WAPL</scope>
</reference>
<reference key="21">
    <citation type="journal article" date="2001" name="Int. J. Radiat. Oncol. Biol. Phys.">
        <title>Novel DNA sequence variants in the hHR21 DNA repair gene in radiosensitive cancer patients.</title>
        <authorList>
            <person name="Severin D.M."/>
            <person name="Leong T."/>
            <person name="Cassidy B."/>
            <person name="Elsaleh H."/>
            <person name="Peters L."/>
            <person name="Venter D."/>
            <person name="Southey M."/>
            <person name="McKay M."/>
        </authorList>
    </citation>
    <scope>VARIANT ARG-481</scope>
</reference>
<reference key="22">
    <citation type="journal article" date="2009" name="Sci. Signal.">
        <title>Quantitative phosphoproteomic analysis of T cell receptor signaling reveals system-wide modulation of protein-protein interactions.</title>
        <authorList>
            <person name="Mayya V."/>
            <person name="Lundgren D.H."/>
            <person name="Hwang S.-I."/>
            <person name="Rezaul K."/>
            <person name="Wu L."/>
            <person name="Eng J.K."/>
            <person name="Rodionov V."/>
            <person name="Han D.K."/>
        </authorList>
    </citation>
    <scope>PHOSPHORYLATION [LARGE SCALE ANALYSIS] AT SER-153 AND SER-175</scope>
    <scope>IDENTIFICATION BY MASS SPECTROMETRY [LARGE SCALE ANALYSIS]</scope>
    <source>
        <tissue>Leukemic T-cell</tissue>
    </source>
</reference>
<reference key="23">
    <citation type="journal article" date="2010" name="Sci. Signal.">
        <title>Quantitative phosphoproteomics reveals widespread full phosphorylation site occupancy during mitosis.</title>
        <authorList>
            <person name="Olsen J.V."/>
            <person name="Vermeulen M."/>
            <person name="Santamaria A."/>
            <person name="Kumar C."/>
            <person name="Miller M.L."/>
            <person name="Jensen L.J."/>
            <person name="Gnad F."/>
            <person name="Cox J."/>
            <person name="Jensen T.S."/>
            <person name="Nigg E.A."/>
            <person name="Brunak S."/>
            <person name="Mann M."/>
        </authorList>
    </citation>
    <scope>PHOSPHORYLATION [LARGE SCALE ANALYSIS] AT SER-46 AND SER-153</scope>
    <scope>IDENTIFICATION BY MASS SPECTROMETRY [LARGE SCALE ANALYSIS]</scope>
    <source>
        <tissue>Cervix carcinoma</tissue>
    </source>
</reference>
<reference key="24">
    <citation type="journal article" date="2011" name="BMC Syst. Biol.">
        <title>Initial characterization of the human central proteome.</title>
        <authorList>
            <person name="Burkard T.R."/>
            <person name="Planyavsky M."/>
            <person name="Kaupe I."/>
            <person name="Breitwieser F.P."/>
            <person name="Buerckstuemmer T."/>
            <person name="Bennett K.L."/>
            <person name="Superti-Furga G."/>
            <person name="Colinge J."/>
        </authorList>
    </citation>
    <scope>IDENTIFICATION BY MASS SPECTROMETRY [LARGE SCALE ANALYSIS]</scope>
</reference>
<reference key="25">
    <citation type="journal article" date="2012" name="Proc. Natl. Acad. Sci. U.S.A.">
        <title>In vitro loading of human cohesin on DNA by the human Scc2-Scc4 loader complex.</title>
        <authorList>
            <person name="Bermudez V.P."/>
            <person name="Farina A."/>
            <person name="Higashi T.L."/>
            <person name="Du F."/>
            <person name="Tappin I."/>
            <person name="Takahashi T.S."/>
            <person name="Hurwitz J."/>
        </authorList>
    </citation>
    <scope>IDENTIFICATION IN THE COHESIN COMPLEX</scope>
    <scope>INTERACTION WITH NIPBL AND MAU2</scope>
</reference>
<reference key="26">
    <citation type="journal article" date="2013" name="J. Proteome Res.">
        <title>Toward a comprehensive characterization of a human cancer cell phosphoproteome.</title>
        <authorList>
            <person name="Zhou H."/>
            <person name="Di Palma S."/>
            <person name="Preisinger C."/>
            <person name="Peng M."/>
            <person name="Polat A.N."/>
            <person name="Heck A.J."/>
            <person name="Mohammed S."/>
        </authorList>
    </citation>
    <scope>PHOSPHORYLATION [LARGE SCALE ANALYSIS] AT THR-394; SER-454; SER-545 AND THR-623</scope>
    <scope>IDENTIFICATION BY MASS SPECTROMETRY [LARGE SCALE ANALYSIS]</scope>
    <source>
        <tissue>Cervix carcinoma</tissue>
        <tissue>Erythroleukemia</tissue>
    </source>
</reference>
<reference key="27">
    <citation type="journal article" date="2014" name="J. Proteomics">
        <title>An enzyme assisted RP-RPLC approach for in-depth analysis of human liver phosphoproteome.</title>
        <authorList>
            <person name="Bian Y."/>
            <person name="Song C."/>
            <person name="Cheng K."/>
            <person name="Dong M."/>
            <person name="Wang F."/>
            <person name="Huang J."/>
            <person name="Sun D."/>
            <person name="Wang L."/>
            <person name="Ye M."/>
            <person name="Zou H."/>
        </authorList>
    </citation>
    <scope>PHOSPHORYLATION [LARGE SCALE ANALYSIS] AT SER-153 AND SER-249</scope>
    <scope>IDENTIFICATION BY MASS SPECTROMETRY [LARGE SCALE ANALYSIS]</scope>
    <source>
        <tissue>Liver</tissue>
    </source>
</reference>
<reference key="28">
    <citation type="journal article" date="2017" name="Nat. Struct. Mol. Biol.">
        <title>Site-specific mapping of the human SUMO proteome reveals co-modification with phosphorylation.</title>
        <authorList>
            <person name="Hendriks I.A."/>
            <person name="Lyon D."/>
            <person name="Young C."/>
            <person name="Jensen L.J."/>
            <person name="Vertegaal A.C."/>
            <person name="Nielsen M.L."/>
        </authorList>
    </citation>
    <scope>SUMOYLATION [LARGE SCALE ANALYSIS] AT LYS-48; LYS-216 AND LYS-418</scope>
    <scope>IDENTIFICATION BY MASS SPECTROMETRY [LARGE SCALE ANALYSIS]</scope>
</reference>
<reference evidence="31 32" key="29">
    <citation type="journal article" date="2020" name="Science">
        <title>Cryo-EM structure of the human cohesin-NIPBL-DNA complex.</title>
        <authorList>
            <person name="Shi Z."/>
            <person name="Gao H."/>
            <person name="Bai X.C."/>
            <person name="Yu H."/>
        </authorList>
    </citation>
    <scope>STRUCTURE BY ELECTRON MICROSCOPY (3.90 ANGSTROMS)</scope>
    <scope>IDENTIFICATION IN THE COHESIN COMPLEX</scope>
    <scope>INTERACTION WITH NIPBL</scope>
</reference>
<reference key="30">
    <citation type="journal article" date="2012" name="Am. J. Hum. Genet.">
        <title>RAD21 mutations cause a human cohesinopathy.</title>
        <authorList>
            <person name="Deardorff M.A."/>
            <person name="Wilde J.J."/>
            <person name="Albrecht M."/>
            <person name="Dickinson E."/>
            <person name="Tennstedt S."/>
            <person name="Braunholz D."/>
            <person name="Monnich M."/>
            <person name="Yan Y."/>
            <person name="Xu W."/>
            <person name="Gil-Rodriguez M.C."/>
            <person name="Clark D."/>
            <person name="Hakonarson H."/>
            <person name="Halbach S."/>
            <person name="Michelis L.D."/>
            <person name="Rampuria A."/>
            <person name="Rossier E."/>
            <person name="Spranger S."/>
            <person name="Van Maldergem L."/>
            <person name="Lynch S.A."/>
            <person name="Gillessen-Kaesbach G."/>
            <person name="Ludecke H.J."/>
            <person name="Ramsay R.G."/>
            <person name="McKay M.J."/>
            <person name="Krantz I.D."/>
            <person name="Xu H."/>
            <person name="Horsfield J.A."/>
            <person name="Kaiser F.J."/>
        </authorList>
    </citation>
    <scope>INVOLVEMENT IN CDLS4</scope>
    <scope>VARIANTS CDLS4 ARG-376 AND ARG-585</scope>
</reference>
<reference key="31">
    <citation type="journal article" date="2015" name="Gastroenterology">
        <title>Mutations in RAD21 disrupt regulation of APOB in patients with chronic intestinal pseudo-obstruction.</title>
        <authorList>
            <person name="Bonora E."/>
            <person name="Bianco F."/>
            <person name="Cordeddu L."/>
            <person name="Bamshad M."/>
            <person name="Francescatto L."/>
            <person name="Dowless D."/>
            <person name="Stanghellini V."/>
            <person name="Cogliandro R.F."/>
            <person name="Lindberg G."/>
            <person name="Mungan Z."/>
            <person name="Cefle K."/>
            <person name="Ozcelik T."/>
            <person name="Palanduz S."/>
            <person name="Ozturk S."/>
            <person name="Gedikbasi A."/>
            <person name="Gori A."/>
            <person name="Pippucci T."/>
            <person name="Graziano C."/>
            <person name="Volta U."/>
            <person name="Caio G."/>
            <person name="Barbara G."/>
            <person name="D'Amato M."/>
            <person name="Seri M."/>
            <person name="Katsanis N."/>
            <person name="Romeo G."/>
            <person name="De Giorgio R."/>
        </authorList>
    </citation>
    <scope>INVOLVEMENT IN MGS</scope>
    <scope>VARIANT MGS THR-622</scope>
    <scope>CHARACTERIZATION OF VARIANT MGS THR-622</scope>
    <scope>FUNCTION</scope>
    <scope>INTERACTION WITH SMC1</scope>
    <scope>TISSUE SPECIFICITY</scope>
</reference>
<reference key="32">
    <citation type="journal article" date="2019" name="Brain">
        <title>Cohesin complex-associated holoprosencephaly.</title>
        <authorList>
            <person name="Kruszka P."/>
            <person name="Berger S.I."/>
            <person name="Casa V."/>
            <person name="Dekker M.R."/>
            <person name="Gaesser J."/>
            <person name="Weiss K."/>
            <person name="Martinez A.F."/>
            <person name="Murdock D.R."/>
            <person name="Louie R.J."/>
            <person name="Prijoles E.J."/>
            <person name="Lichty A.W."/>
            <person name="Brouwer O.F."/>
            <person name="Zonneveld-Huijssoon E."/>
            <person name="Stephan M.J."/>
            <person name="Hogue J."/>
            <person name="Hu P."/>
            <person name="Tanima-Nagai M."/>
            <person name="Everson J.L."/>
            <person name="Prasad C."/>
            <person name="Cereda A."/>
            <person name="Iascone M."/>
            <person name="Schreiber A."/>
            <person name="Zurcher V."/>
            <person name="Corsten-Janssen N."/>
            <person name="Escobar L."/>
            <person name="Clegg N.J."/>
            <person name="Delgado M.R."/>
            <person name="Hajirnis O."/>
            <person name="Balasubramanian M."/>
            <person name="Kayserili H."/>
            <person name="Deardorff M."/>
            <person name="Poot R.A."/>
            <person name="Wendt K.S."/>
            <person name="Lipinski R.J."/>
            <person name="Muenke M."/>
        </authorList>
    </citation>
    <scope>VARIANT CDLS4 197-GLN--ILE-631 DEL</scope>
</reference>
<sequence>MFYAHFVLSKRGPLAKIWLAAHWDKKLTKAHVFECNLESSVESIISPKVKMALRTSGHLLLGVVRIYHRKAKYLLADCNEAFIKIKMAFRPGVVDLPEENREAAYNAITLPEEFHDFDQPLPDLDDIDVAQQFSLNQSRVEEITMREEVGNISILQENDFGDFGMDDREIMREGSAFEDDDMLVSTTTSNLLLESEQSTSNLNEKINHLEYEDQYKDDNFGEGNDGGILDDKLISNNDGGIFDDPPALSEAGVMLPEQPAHDDMDEDDNVSMGGPDSPDSVDPVEPMPTMTDQTTLVPNEEEAFALEPIDITVKETKAKRKRKLIVDSVKELDSKTIRAQLSDYSDIVTTLDLAPPTKKLMMWKETGGVEKLFSLPAQPLWNNRLLKLFTRCLTPLVPEDLRKRRKGGEADNLDEFLKEFENPEVPREDQQQQHQQRDVIDEPIIEEPSRLQESVMEASRTNIDESAMPPPPPQGVKRKAGQIDPEPVMPPQQVEQMEIPPVELPPEEPPNICQLIPELELLPEKEKEKEKEKEDDEEEEDEDASGGDQDQEERRWNKRTQQMLHGLQRALAKTGAESISLLELCRNTNRKQAAAKFYSFLVLKKQQAIELTQEEPYSDIIATPGPRFHII</sequence>
<dbReference type="EMBL" id="X98294">
    <property type="protein sequence ID" value="CAA66940.1"/>
    <property type="molecule type" value="mRNA"/>
</dbReference>
<dbReference type="EMBL" id="D38551">
    <property type="protein sequence ID" value="BAA07554.2"/>
    <property type="status" value="ALT_INIT"/>
    <property type="molecule type" value="mRNA"/>
</dbReference>
<dbReference type="EMBL" id="AY675320">
    <property type="protein sequence ID" value="AAT70725.1"/>
    <property type="molecule type" value="Genomic_DNA"/>
</dbReference>
<dbReference type="EMBL" id="AK289505">
    <property type="protein sequence ID" value="BAF82194.1"/>
    <property type="molecule type" value="mRNA"/>
</dbReference>
<dbReference type="EMBL" id="CH471060">
    <property type="protein sequence ID" value="EAW91963.1"/>
    <property type="molecule type" value="Genomic_DNA"/>
</dbReference>
<dbReference type="EMBL" id="BC050381">
    <property type="protein sequence ID" value="AAH50381.1"/>
    <property type="molecule type" value="mRNA"/>
</dbReference>
<dbReference type="CCDS" id="CCDS6321.1"/>
<dbReference type="RefSeq" id="NP_006256.1">
    <property type="nucleotide sequence ID" value="NM_006265.3"/>
</dbReference>
<dbReference type="PDB" id="4PJU">
    <property type="method" value="X-ray"/>
    <property type="resolution" value="3.05 A"/>
    <property type="chains" value="B=281-420"/>
</dbReference>
<dbReference type="PDB" id="4PJW">
    <property type="method" value="X-ray"/>
    <property type="resolution" value="2.85 A"/>
    <property type="chains" value="B=281-420"/>
</dbReference>
<dbReference type="PDB" id="4PK7">
    <property type="method" value="X-ray"/>
    <property type="resolution" value="2.95 A"/>
    <property type="chains" value="B=281-420"/>
</dbReference>
<dbReference type="PDB" id="6QNX">
    <property type="method" value="X-ray"/>
    <property type="resolution" value="2.70 A"/>
    <property type="chains" value="B=1-631"/>
</dbReference>
<dbReference type="PDB" id="6RRC">
    <property type="method" value="X-ray"/>
    <property type="resolution" value="2.37 A"/>
    <property type="chains" value="B/D=321-345"/>
</dbReference>
<dbReference type="PDB" id="6RRK">
    <property type="method" value="X-ray"/>
    <property type="resolution" value="3.17 A"/>
    <property type="chains" value="C/D=356-395"/>
</dbReference>
<dbReference type="PDB" id="6WG3">
    <property type="method" value="EM"/>
    <property type="resolution" value="5.30 A"/>
    <property type="chains" value="C=1-631"/>
</dbReference>
<dbReference type="PDB" id="6WGE">
    <property type="method" value="EM"/>
    <property type="resolution" value="3.90 A"/>
    <property type="chains" value="C=1-631"/>
</dbReference>
<dbReference type="PDB" id="7W1M">
    <property type="method" value="EM"/>
    <property type="resolution" value="6.50 A"/>
    <property type="chains" value="C=1-631"/>
</dbReference>
<dbReference type="PDB" id="7ZJS">
    <property type="method" value="X-ray"/>
    <property type="resolution" value="3.24 A"/>
    <property type="chains" value="B/D=1-631"/>
</dbReference>
<dbReference type="PDB" id="8K4D">
    <property type="method" value="X-ray"/>
    <property type="resolution" value="3.52 A"/>
    <property type="chains" value="B=281-420"/>
</dbReference>
<dbReference type="PDB" id="8P0A">
    <property type="method" value="EM"/>
    <property type="resolution" value="3.67 A"/>
    <property type="chains" value="C=558-629"/>
</dbReference>
<dbReference type="PDB" id="8PQ5">
    <property type="method" value="EM"/>
    <property type="resolution" value="4.40 A"/>
    <property type="chains" value="C=558-629"/>
</dbReference>
<dbReference type="PDB" id="8RO6">
    <property type="method" value="X-ray"/>
    <property type="resolution" value="2.20 A"/>
    <property type="chains" value="B=558-629"/>
</dbReference>
<dbReference type="PDB" id="8RO7">
    <property type="method" value="X-ray"/>
    <property type="resolution" value="2.09 A"/>
    <property type="chains" value="B=558-629"/>
</dbReference>
<dbReference type="PDB" id="8RO8">
    <property type="method" value="X-ray"/>
    <property type="resolution" value="1.90 A"/>
    <property type="chains" value="B=558-629"/>
</dbReference>
<dbReference type="PDB" id="8RO9">
    <property type="method" value="X-ray"/>
    <property type="resolution" value="1.77 A"/>
    <property type="chains" value="B/D=558-629"/>
</dbReference>
<dbReference type="PDB" id="8ROA">
    <property type="method" value="X-ray"/>
    <property type="resolution" value="2.44 A"/>
    <property type="chains" value="B/D=558-629"/>
</dbReference>
<dbReference type="PDB" id="8ROB">
    <property type="method" value="X-ray"/>
    <property type="resolution" value="2.50 A"/>
    <property type="chains" value="B=558-629"/>
</dbReference>
<dbReference type="PDB" id="8ROC">
    <property type="method" value="X-ray"/>
    <property type="resolution" value="1.85 A"/>
    <property type="chains" value="B=558-629"/>
</dbReference>
<dbReference type="PDB" id="8ROD">
    <property type="method" value="X-ray"/>
    <property type="resolution" value="1.50 A"/>
    <property type="chains" value="B=558-629"/>
</dbReference>
<dbReference type="PDB" id="8ROE">
    <property type="method" value="X-ray"/>
    <property type="resolution" value="1.36 A"/>
    <property type="chains" value="B=558-629"/>
</dbReference>
<dbReference type="PDB" id="8ROF">
    <property type="method" value="X-ray"/>
    <property type="resolution" value="1.65 A"/>
    <property type="chains" value="B=558-629"/>
</dbReference>
<dbReference type="PDB" id="8ROG">
    <property type="method" value="X-ray"/>
    <property type="resolution" value="1.94 A"/>
    <property type="chains" value="B=558-629"/>
</dbReference>
<dbReference type="PDB" id="8ROH">
    <property type="method" value="X-ray"/>
    <property type="resolution" value="2.60 A"/>
    <property type="chains" value="B=1-102"/>
</dbReference>
<dbReference type="PDB" id="8ROI">
    <property type="method" value="X-ray"/>
    <property type="resolution" value="2.45 A"/>
    <property type="chains" value="B=1-102"/>
</dbReference>
<dbReference type="PDB" id="8ROJ">
    <property type="method" value="X-ray"/>
    <property type="resolution" value="3.00 A"/>
    <property type="chains" value="B=1-102"/>
</dbReference>
<dbReference type="PDB" id="8ROK">
    <property type="method" value="X-ray"/>
    <property type="resolution" value="2.25 A"/>
    <property type="chains" value="B/D=1-102"/>
</dbReference>
<dbReference type="PDB" id="8ROL">
    <property type="method" value="X-ray"/>
    <property type="resolution" value="3.11 A"/>
    <property type="chains" value="B=1-102"/>
</dbReference>
<dbReference type="PDBsum" id="4PJU"/>
<dbReference type="PDBsum" id="4PJW"/>
<dbReference type="PDBsum" id="4PK7"/>
<dbReference type="PDBsum" id="6QNX"/>
<dbReference type="PDBsum" id="6RRC"/>
<dbReference type="PDBsum" id="6RRK"/>
<dbReference type="PDBsum" id="6WG3"/>
<dbReference type="PDBsum" id="6WGE"/>
<dbReference type="PDBsum" id="7W1M"/>
<dbReference type="PDBsum" id="7ZJS"/>
<dbReference type="PDBsum" id="8K4D"/>
<dbReference type="PDBsum" id="8P0A"/>
<dbReference type="PDBsum" id="8PQ5"/>
<dbReference type="PDBsum" id="8RO6"/>
<dbReference type="PDBsum" id="8RO7"/>
<dbReference type="PDBsum" id="8RO8"/>
<dbReference type="PDBsum" id="8RO9"/>
<dbReference type="PDBsum" id="8ROA"/>
<dbReference type="PDBsum" id="8ROB"/>
<dbReference type="PDBsum" id="8ROC"/>
<dbReference type="PDBsum" id="8ROD"/>
<dbReference type="PDBsum" id="8ROE"/>
<dbReference type="PDBsum" id="8ROF"/>
<dbReference type="PDBsum" id="8ROG"/>
<dbReference type="PDBsum" id="8ROH"/>
<dbReference type="PDBsum" id="8ROI"/>
<dbReference type="PDBsum" id="8ROJ"/>
<dbReference type="PDBsum" id="8ROK"/>
<dbReference type="PDBsum" id="8ROL"/>
<dbReference type="EMDB" id="EMD-17331"/>
<dbReference type="EMDB" id="EMD-17820"/>
<dbReference type="EMDB" id="EMD-21658"/>
<dbReference type="EMDB" id="EMD-21663"/>
<dbReference type="EMDB" id="EMD-32252"/>
<dbReference type="EMDB" id="EMD-4029"/>
<dbReference type="EMDB" id="EMD-4030"/>
<dbReference type="EMDB" id="EMD-4031"/>
<dbReference type="SMR" id="O60216"/>
<dbReference type="BioGRID" id="111822">
    <property type="interactions" value="403"/>
</dbReference>
<dbReference type="ComplexPortal" id="CPX-5989">
    <property type="entry name" value="Nuclear mitotic cohesin complex, STAG1 variant"/>
</dbReference>
<dbReference type="ComplexPortal" id="CPX-5991">
    <property type="entry name" value="Nuclear mitotic cohesin complex, STAG2 variant"/>
</dbReference>
<dbReference type="ComplexPortal" id="CPX-6082">
    <property type="entry name" value="Nuclear meiotic cohesin complex, RAD21 variant"/>
</dbReference>
<dbReference type="CORUM" id="O60216"/>
<dbReference type="DIP" id="DIP-29201N"/>
<dbReference type="ELM" id="O60216"/>
<dbReference type="FunCoup" id="O60216">
    <property type="interactions" value="4618"/>
</dbReference>
<dbReference type="IntAct" id="O60216">
    <property type="interactions" value="108"/>
</dbReference>
<dbReference type="MINT" id="O60216"/>
<dbReference type="STRING" id="9606.ENSP00000297338"/>
<dbReference type="GlyGen" id="O60216">
    <property type="glycosylation" value="1 site, 1 O-linked glycan (1 site)"/>
</dbReference>
<dbReference type="iPTMnet" id="O60216"/>
<dbReference type="MetOSite" id="O60216"/>
<dbReference type="PhosphoSitePlus" id="O60216"/>
<dbReference type="SwissPalm" id="O60216"/>
<dbReference type="BioMuta" id="RAD21"/>
<dbReference type="jPOST" id="O60216"/>
<dbReference type="MassIVE" id="O60216"/>
<dbReference type="PaxDb" id="9606-ENSP00000297338"/>
<dbReference type="PeptideAtlas" id="O60216"/>
<dbReference type="ProteomicsDB" id="49246"/>
<dbReference type="Pumba" id="O60216"/>
<dbReference type="Antibodypedia" id="13592">
    <property type="antibodies" value="340 antibodies from 36 providers"/>
</dbReference>
<dbReference type="DNASU" id="5885"/>
<dbReference type="Ensembl" id="ENST00000297338.7">
    <property type="protein sequence ID" value="ENSP00000297338.2"/>
    <property type="gene ID" value="ENSG00000164754.16"/>
</dbReference>
<dbReference type="Ensembl" id="ENST00000517485.6">
    <property type="protein sequence ID" value="ENSP00000427923.2"/>
    <property type="gene ID" value="ENSG00000164754.16"/>
</dbReference>
<dbReference type="Ensembl" id="ENST00000517749.2">
    <property type="protein sequence ID" value="ENSP00000430273.2"/>
    <property type="gene ID" value="ENSG00000164754.16"/>
</dbReference>
<dbReference type="Ensembl" id="ENST00000519837.6">
    <property type="protein sequence ID" value="ENSP00000430524.2"/>
    <property type="gene ID" value="ENSG00000164754.16"/>
</dbReference>
<dbReference type="Ensembl" id="ENST00000520992.6">
    <property type="protein sequence ID" value="ENSP00000429342.2"/>
    <property type="gene ID" value="ENSG00000164754.16"/>
</dbReference>
<dbReference type="Ensembl" id="ENST00000522699.2">
    <property type="protein sequence ID" value="ENSP00000428158.2"/>
    <property type="gene ID" value="ENSG00000164754.16"/>
</dbReference>
<dbReference type="Ensembl" id="ENST00000687358.1">
    <property type="protein sequence ID" value="ENSP00000509687.1"/>
    <property type="gene ID" value="ENSG00000164754.16"/>
</dbReference>
<dbReference type="GeneID" id="5885"/>
<dbReference type="KEGG" id="hsa:5885"/>
<dbReference type="MANE-Select" id="ENST00000297338.7">
    <property type="protein sequence ID" value="ENSP00000297338.2"/>
    <property type="RefSeq nucleotide sequence ID" value="NM_006265.3"/>
    <property type="RefSeq protein sequence ID" value="NP_006256.1"/>
</dbReference>
<dbReference type="UCSC" id="uc003yod.4">
    <property type="organism name" value="human"/>
</dbReference>
<dbReference type="AGR" id="HGNC:9811"/>
<dbReference type="CTD" id="5885"/>
<dbReference type="DisGeNET" id="5885"/>
<dbReference type="GeneCards" id="RAD21"/>
<dbReference type="GeneReviews" id="RAD21"/>
<dbReference type="HGNC" id="HGNC:9811">
    <property type="gene designation" value="RAD21"/>
</dbReference>
<dbReference type="HPA" id="ENSG00000164754">
    <property type="expression patterns" value="Low tissue specificity"/>
</dbReference>
<dbReference type="MalaCards" id="RAD21"/>
<dbReference type="MIM" id="606462">
    <property type="type" value="gene"/>
</dbReference>
<dbReference type="MIM" id="611376">
    <property type="type" value="phenotype"/>
</dbReference>
<dbReference type="MIM" id="614701">
    <property type="type" value="phenotype"/>
</dbReference>
<dbReference type="neXtProt" id="NX_O60216"/>
<dbReference type="OpenTargets" id="ENSG00000164754"/>
<dbReference type="Orphanet" id="199">
    <property type="disease" value="Cornelia de Lange syndrome"/>
</dbReference>
<dbReference type="Orphanet" id="502">
    <property type="disease" value="Trichorhinophalangeal syndrome type 2"/>
</dbReference>
<dbReference type="PharmGKB" id="PA34170"/>
<dbReference type="VEuPathDB" id="HostDB:ENSG00000164754"/>
<dbReference type="eggNOG" id="KOG1213">
    <property type="taxonomic scope" value="Eukaryota"/>
</dbReference>
<dbReference type="GeneTree" id="ENSGT00940000154655"/>
<dbReference type="HOGENOM" id="CLU_015775_1_1_1"/>
<dbReference type="InParanoid" id="O60216"/>
<dbReference type="OMA" id="HEDYEFP"/>
<dbReference type="OrthoDB" id="10071381at2759"/>
<dbReference type="PAN-GO" id="O60216">
    <property type="GO annotations" value="4 GO annotations based on evolutionary models"/>
</dbReference>
<dbReference type="PhylomeDB" id="O60216"/>
<dbReference type="TreeFam" id="TF101215"/>
<dbReference type="BioCyc" id="MetaCyc:ENSG00000164754-MONOMER"/>
<dbReference type="PathwayCommons" id="O60216"/>
<dbReference type="Reactome" id="R-HSA-1221632">
    <property type="pathway name" value="Meiotic synapsis"/>
</dbReference>
<dbReference type="Reactome" id="R-HSA-2467813">
    <property type="pathway name" value="Separation of Sister Chromatids"/>
</dbReference>
<dbReference type="Reactome" id="R-HSA-2468052">
    <property type="pathway name" value="Establishment of Sister Chromatid Cohesion"/>
</dbReference>
<dbReference type="Reactome" id="R-HSA-2470946">
    <property type="pathway name" value="Cohesin Loading onto Chromatin"/>
</dbReference>
<dbReference type="Reactome" id="R-HSA-2500257">
    <property type="pathway name" value="Resolution of Sister Chromatid Cohesion"/>
</dbReference>
<dbReference type="Reactome" id="R-HSA-3108214">
    <property type="pathway name" value="SUMOylation of DNA damage response and repair proteins"/>
</dbReference>
<dbReference type="Reactome" id="R-HSA-9018519">
    <property type="pathway name" value="Estrogen-dependent gene expression"/>
</dbReference>
<dbReference type="SignaLink" id="O60216"/>
<dbReference type="SIGNOR" id="O60216"/>
<dbReference type="BioGRID-ORCS" id="5885">
    <property type="hits" value="728 hits in 1136 CRISPR screens"/>
</dbReference>
<dbReference type="CD-CODE" id="91857CE7">
    <property type="entry name" value="Nucleolus"/>
</dbReference>
<dbReference type="CD-CODE" id="DEE660B4">
    <property type="entry name" value="Stress granule"/>
</dbReference>
<dbReference type="ChiTaRS" id="RAD21">
    <property type="organism name" value="human"/>
</dbReference>
<dbReference type="EvolutionaryTrace" id="O60216"/>
<dbReference type="GeneWiki" id="RAD21"/>
<dbReference type="GenomeRNAi" id="5885"/>
<dbReference type="Pharos" id="O60216">
    <property type="development level" value="Tbio"/>
</dbReference>
<dbReference type="PRO" id="PR:O60216"/>
<dbReference type="Proteomes" id="UP000005640">
    <property type="component" value="Chromosome 8"/>
</dbReference>
<dbReference type="RNAct" id="O60216">
    <property type="molecule type" value="protein"/>
</dbReference>
<dbReference type="Bgee" id="ENSG00000164754">
    <property type="expression patterns" value="Expressed in ventricular zone and 215 other cell types or tissues"/>
</dbReference>
<dbReference type="ExpressionAtlas" id="O60216">
    <property type="expression patterns" value="baseline and differential"/>
</dbReference>
<dbReference type="GO" id="GO:0000785">
    <property type="term" value="C:chromatin"/>
    <property type="evidence" value="ECO:0007669"/>
    <property type="project" value="Ensembl"/>
</dbReference>
<dbReference type="GO" id="GO:0005694">
    <property type="term" value="C:chromosome"/>
    <property type="evidence" value="ECO:0000304"/>
    <property type="project" value="Reactome"/>
</dbReference>
<dbReference type="GO" id="GO:0000775">
    <property type="term" value="C:chromosome, centromeric region"/>
    <property type="evidence" value="ECO:0000304"/>
    <property type="project" value="Reactome"/>
</dbReference>
<dbReference type="GO" id="GO:0008278">
    <property type="term" value="C:cohesin complex"/>
    <property type="evidence" value="ECO:0000314"/>
    <property type="project" value="UniProtKB"/>
</dbReference>
<dbReference type="GO" id="GO:0000794">
    <property type="term" value="C:condensed nuclear chromosome"/>
    <property type="evidence" value="ECO:0007669"/>
    <property type="project" value="Ensembl"/>
</dbReference>
<dbReference type="GO" id="GO:0005829">
    <property type="term" value="C:cytosol"/>
    <property type="evidence" value="ECO:0000304"/>
    <property type="project" value="Reactome"/>
</dbReference>
<dbReference type="GO" id="GO:0030893">
    <property type="term" value="C:meiotic cohesin complex"/>
    <property type="evidence" value="ECO:0000318"/>
    <property type="project" value="GO_Central"/>
</dbReference>
<dbReference type="GO" id="GO:0016020">
    <property type="term" value="C:membrane"/>
    <property type="evidence" value="ECO:0007005"/>
    <property type="project" value="UniProtKB"/>
</dbReference>
<dbReference type="GO" id="GO:0030496">
    <property type="term" value="C:midbody"/>
    <property type="evidence" value="ECO:0000314"/>
    <property type="project" value="HPA"/>
</dbReference>
<dbReference type="GO" id="GO:0030892">
    <property type="term" value="C:mitotic cohesin complex"/>
    <property type="evidence" value="ECO:0000353"/>
    <property type="project" value="ComplexPortal"/>
</dbReference>
<dbReference type="GO" id="GO:0016363">
    <property type="term" value="C:nuclear matrix"/>
    <property type="evidence" value="ECO:0000314"/>
    <property type="project" value="UniProtKB"/>
</dbReference>
<dbReference type="GO" id="GO:0005654">
    <property type="term" value="C:nucleoplasm"/>
    <property type="evidence" value="ECO:0000314"/>
    <property type="project" value="HPA"/>
</dbReference>
<dbReference type="GO" id="GO:0005634">
    <property type="term" value="C:nucleus"/>
    <property type="evidence" value="ECO:0000303"/>
    <property type="project" value="ComplexPortal"/>
</dbReference>
<dbReference type="GO" id="GO:0000922">
    <property type="term" value="C:spindle pole"/>
    <property type="evidence" value="ECO:0007669"/>
    <property type="project" value="UniProtKB-SubCell"/>
</dbReference>
<dbReference type="GO" id="GO:0003682">
    <property type="term" value="F:chromatin binding"/>
    <property type="evidence" value="ECO:0000318"/>
    <property type="project" value="GO_Central"/>
</dbReference>
<dbReference type="GO" id="GO:0000987">
    <property type="term" value="F:cis-regulatory region sequence-specific DNA binding"/>
    <property type="evidence" value="ECO:0007669"/>
    <property type="project" value="Ensembl"/>
</dbReference>
<dbReference type="GO" id="GO:0140297">
    <property type="term" value="F:DNA-binding transcription factor binding"/>
    <property type="evidence" value="ECO:0007669"/>
    <property type="project" value="Ensembl"/>
</dbReference>
<dbReference type="GO" id="GO:0106222">
    <property type="term" value="F:lncRNA binding"/>
    <property type="evidence" value="ECO:0007669"/>
    <property type="project" value="Ensembl"/>
</dbReference>
<dbReference type="GO" id="GO:0006915">
    <property type="term" value="P:apoptotic process"/>
    <property type="evidence" value="ECO:0007669"/>
    <property type="project" value="UniProtKB-KW"/>
</dbReference>
<dbReference type="GO" id="GO:0051301">
    <property type="term" value="P:cell division"/>
    <property type="evidence" value="ECO:0007669"/>
    <property type="project" value="UniProtKB-KW"/>
</dbReference>
<dbReference type="GO" id="GO:0140588">
    <property type="term" value="P:chromatin looping"/>
    <property type="evidence" value="ECO:0007669"/>
    <property type="project" value="Ensembl"/>
</dbReference>
<dbReference type="GO" id="GO:0007059">
    <property type="term" value="P:chromosome segregation"/>
    <property type="evidence" value="ECO:0007669"/>
    <property type="project" value="UniProtKB-KW"/>
</dbReference>
<dbReference type="GO" id="GO:0006310">
    <property type="term" value="P:DNA recombination"/>
    <property type="evidence" value="ECO:0000304"/>
    <property type="project" value="ProtInc"/>
</dbReference>
<dbReference type="GO" id="GO:0006302">
    <property type="term" value="P:double-strand break repair"/>
    <property type="evidence" value="ECO:0000304"/>
    <property type="project" value="ProtInc"/>
</dbReference>
<dbReference type="GO" id="GO:0034089">
    <property type="term" value="P:establishment of meiotic sister chromatid cohesion"/>
    <property type="evidence" value="ECO:0000303"/>
    <property type="project" value="ComplexPortal"/>
</dbReference>
<dbReference type="GO" id="GO:0034087">
    <property type="term" value="P:establishment of mitotic sister chromatid cohesion"/>
    <property type="evidence" value="ECO:0000303"/>
    <property type="project" value="ComplexPortal"/>
</dbReference>
<dbReference type="GO" id="GO:0010972">
    <property type="term" value="P:negative regulation of G2/M transition of mitotic cell cycle"/>
    <property type="evidence" value="ECO:0007669"/>
    <property type="project" value="Ensembl"/>
</dbReference>
<dbReference type="GO" id="GO:0034351">
    <property type="term" value="P:negative regulation of glial cell apoptotic process"/>
    <property type="evidence" value="ECO:0007669"/>
    <property type="project" value="Ensembl"/>
</dbReference>
<dbReference type="GO" id="GO:0032691">
    <property type="term" value="P:negative regulation of interleukin-1 beta production"/>
    <property type="evidence" value="ECO:0007669"/>
    <property type="project" value="Ensembl"/>
</dbReference>
<dbReference type="GO" id="GO:0045841">
    <property type="term" value="P:negative regulation of mitotic metaphase/anaphase transition"/>
    <property type="evidence" value="ECO:0007669"/>
    <property type="project" value="Ensembl"/>
</dbReference>
<dbReference type="GO" id="GO:0043524">
    <property type="term" value="P:negative regulation of neuron apoptotic process"/>
    <property type="evidence" value="ECO:0007669"/>
    <property type="project" value="Ensembl"/>
</dbReference>
<dbReference type="GO" id="GO:0032720">
    <property type="term" value="P:negative regulation of tumor necrosis factor production"/>
    <property type="evidence" value="ECO:0007669"/>
    <property type="project" value="Ensembl"/>
</dbReference>
<dbReference type="GO" id="GO:0032733">
    <property type="term" value="P:positive regulation of interleukin-10 production"/>
    <property type="evidence" value="ECO:0007669"/>
    <property type="project" value="Ensembl"/>
</dbReference>
<dbReference type="GO" id="GO:0045876">
    <property type="term" value="P:positive regulation of sister chromatid cohesion"/>
    <property type="evidence" value="ECO:0000315"/>
    <property type="project" value="UniProtKB"/>
</dbReference>
<dbReference type="GO" id="GO:0071168">
    <property type="term" value="P:protein localization to chromatin"/>
    <property type="evidence" value="ECO:0000315"/>
    <property type="project" value="UniProtKB"/>
</dbReference>
<dbReference type="GO" id="GO:0007131">
    <property type="term" value="P:reciprocal meiotic recombination"/>
    <property type="evidence" value="ECO:0000304"/>
    <property type="project" value="ProtInc"/>
</dbReference>
<dbReference type="GO" id="GO:0006357">
    <property type="term" value="P:regulation of transcription by RNA polymerase II"/>
    <property type="evidence" value="ECO:0000314"/>
    <property type="project" value="BHF-UCL"/>
</dbReference>
<dbReference type="GO" id="GO:1990414">
    <property type="term" value="P:replication-born double-strand break repair via sister chromatid exchange"/>
    <property type="evidence" value="ECO:0000318"/>
    <property type="project" value="GO_Central"/>
</dbReference>
<dbReference type="GO" id="GO:0001666">
    <property type="term" value="P:response to hypoxia"/>
    <property type="evidence" value="ECO:0007669"/>
    <property type="project" value="Ensembl"/>
</dbReference>
<dbReference type="GO" id="GO:0007062">
    <property type="term" value="P:sister chromatid cohesion"/>
    <property type="evidence" value="ECO:0000318"/>
    <property type="project" value="GO_Central"/>
</dbReference>
<dbReference type="CDD" id="cd21792">
    <property type="entry name" value="Rad21_Rec8_M_NXP1-like"/>
    <property type="match status" value="1"/>
</dbReference>
<dbReference type="FunFam" id="1.10.10.580:FF:000001">
    <property type="entry name" value="double-strand-break repair protein rad21 homolog"/>
    <property type="match status" value="1"/>
</dbReference>
<dbReference type="Gene3D" id="1.10.10.580">
    <property type="entry name" value="Structural maintenance of chromosome 1. Chain E"/>
    <property type="match status" value="1"/>
</dbReference>
<dbReference type="IDEAL" id="IID00642"/>
<dbReference type="InterPro" id="IPR049589">
    <property type="entry name" value="NXP1_M-like"/>
</dbReference>
<dbReference type="InterPro" id="IPR039781">
    <property type="entry name" value="Rad21/Rec8-like"/>
</dbReference>
<dbReference type="InterPro" id="IPR006909">
    <property type="entry name" value="Rad21/Rec8_C_eu"/>
</dbReference>
<dbReference type="InterPro" id="IPR006910">
    <property type="entry name" value="Rad21_Rec8_N"/>
</dbReference>
<dbReference type="InterPro" id="IPR023093">
    <property type="entry name" value="ScpA-like_C"/>
</dbReference>
<dbReference type="InterPro" id="IPR036390">
    <property type="entry name" value="WH_DNA-bd_sf"/>
</dbReference>
<dbReference type="PANTHER" id="PTHR12585:SF20">
    <property type="entry name" value="DOUBLE-STRAND-BREAK REPAIR PROTEIN RAD21 HOMOLOG"/>
    <property type="match status" value="1"/>
</dbReference>
<dbReference type="PANTHER" id="PTHR12585">
    <property type="entry name" value="SCC1 / RAD21 FAMILY MEMBER"/>
    <property type="match status" value="1"/>
</dbReference>
<dbReference type="Pfam" id="PF04824">
    <property type="entry name" value="Rad21_Rec8"/>
    <property type="match status" value="1"/>
</dbReference>
<dbReference type="Pfam" id="PF04825">
    <property type="entry name" value="Rad21_Rec8_N"/>
    <property type="match status" value="1"/>
</dbReference>
<dbReference type="SUPFAM" id="SSF46785">
    <property type="entry name" value="Winged helix' DNA-binding domain"/>
    <property type="match status" value="1"/>
</dbReference>
<evidence type="ECO:0000250" key="1">
    <source>
        <dbReference type="UniProtKB" id="Q61550"/>
    </source>
</evidence>
<evidence type="ECO:0000250" key="2">
    <source>
        <dbReference type="UniProtKB" id="Q6TEL1"/>
    </source>
</evidence>
<evidence type="ECO:0000256" key="3">
    <source>
        <dbReference type="SAM" id="MobiDB-lite"/>
    </source>
</evidence>
<evidence type="ECO:0000269" key="4">
    <source>
    </source>
</evidence>
<evidence type="ECO:0000269" key="5">
    <source>
    </source>
</evidence>
<evidence type="ECO:0000269" key="6">
    <source>
    </source>
</evidence>
<evidence type="ECO:0000269" key="7">
    <source>
    </source>
</evidence>
<evidence type="ECO:0000269" key="8">
    <source>
    </source>
</evidence>
<evidence type="ECO:0000269" key="9">
    <source>
    </source>
</evidence>
<evidence type="ECO:0000269" key="10">
    <source>
    </source>
</evidence>
<evidence type="ECO:0000269" key="11">
    <source>
    </source>
</evidence>
<evidence type="ECO:0000269" key="12">
    <source>
    </source>
</evidence>
<evidence type="ECO:0000269" key="13">
    <source>
    </source>
</evidence>
<evidence type="ECO:0000269" key="14">
    <source>
    </source>
</evidence>
<evidence type="ECO:0000269" key="15">
    <source>
    </source>
</evidence>
<evidence type="ECO:0000269" key="16">
    <source>
    </source>
</evidence>
<evidence type="ECO:0000269" key="17">
    <source>
    </source>
</evidence>
<evidence type="ECO:0000269" key="18">
    <source>
    </source>
</evidence>
<evidence type="ECO:0000269" key="19">
    <source>
    </source>
</evidence>
<evidence type="ECO:0000269" key="20">
    <source>
    </source>
</evidence>
<evidence type="ECO:0000269" key="21">
    <source>
    </source>
</evidence>
<evidence type="ECO:0000269" key="22">
    <source>
    </source>
</evidence>
<evidence type="ECO:0000303" key="23">
    <source>
    </source>
</evidence>
<evidence type="ECO:0000303" key="24">
    <source>
    </source>
</evidence>
<evidence type="ECO:0000303" key="25">
    <source>
    </source>
</evidence>
<evidence type="ECO:0000303" key="26">
    <source>
    </source>
</evidence>
<evidence type="ECO:0000303" key="27">
    <source>
    </source>
</evidence>
<evidence type="ECO:0000303" key="28">
    <source>
    </source>
</evidence>
<evidence type="ECO:0000305" key="29"/>
<evidence type="ECO:0000305" key="30">
    <source>
    </source>
</evidence>
<evidence type="ECO:0007744" key="31">
    <source>
        <dbReference type="PDB" id="6WG3"/>
    </source>
</evidence>
<evidence type="ECO:0007744" key="32">
    <source>
        <dbReference type="PDB" id="6WGE"/>
    </source>
</evidence>
<evidence type="ECO:0007744" key="33">
    <source>
    </source>
</evidence>
<evidence type="ECO:0007744" key="34">
    <source>
    </source>
</evidence>
<evidence type="ECO:0007744" key="35">
    <source>
    </source>
</evidence>
<evidence type="ECO:0007744" key="36">
    <source>
    </source>
</evidence>
<evidence type="ECO:0007744" key="37">
    <source>
    </source>
</evidence>
<evidence type="ECO:0007744" key="38">
    <source>
    </source>
</evidence>
<evidence type="ECO:0007829" key="39">
    <source>
        <dbReference type="PDB" id="4PK7"/>
    </source>
</evidence>
<evidence type="ECO:0007829" key="40">
    <source>
        <dbReference type="PDB" id="6QNX"/>
    </source>
</evidence>
<evidence type="ECO:0007829" key="41">
    <source>
        <dbReference type="PDB" id="6RRC"/>
    </source>
</evidence>
<evidence type="ECO:0007829" key="42">
    <source>
        <dbReference type="PDB" id="8ROC"/>
    </source>
</evidence>
<evidence type="ECO:0007829" key="43">
    <source>
        <dbReference type="PDB" id="8ROE"/>
    </source>
</evidence>
<evidence type="ECO:0007829" key="44">
    <source>
        <dbReference type="PDB" id="8ROK"/>
    </source>
</evidence>